<gene>
    <name type="primary">pan6</name>
    <name type="ORF">SPAC5H10.08c</name>
</gene>
<accession>Q09673</accession>
<evidence type="ECO:0000305" key="1"/>
<name>PANC_SCHPO</name>
<organism>
    <name type="scientific">Schizosaccharomyces pombe (strain 972 / ATCC 24843)</name>
    <name type="common">Fission yeast</name>
    <dbReference type="NCBI Taxonomy" id="284812"/>
    <lineage>
        <taxon>Eukaryota</taxon>
        <taxon>Fungi</taxon>
        <taxon>Dikarya</taxon>
        <taxon>Ascomycota</taxon>
        <taxon>Taphrinomycotina</taxon>
        <taxon>Schizosaccharomycetes</taxon>
        <taxon>Schizosaccharomycetales</taxon>
        <taxon>Schizosaccharomycetaceae</taxon>
        <taxon>Schizosaccharomyces</taxon>
    </lineage>
</organism>
<comment type="catalytic activity">
    <reaction>
        <text>(R)-pantoate + beta-alanine + ATP = (R)-pantothenate + AMP + diphosphate + H(+)</text>
        <dbReference type="Rhea" id="RHEA:10912"/>
        <dbReference type="ChEBI" id="CHEBI:15378"/>
        <dbReference type="ChEBI" id="CHEBI:15980"/>
        <dbReference type="ChEBI" id="CHEBI:29032"/>
        <dbReference type="ChEBI" id="CHEBI:30616"/>
        <dbReference type="ChEBI" id="CHEBI:33019"/>
        <dbReference type="ChEBI" id="CHEBI:57966"/>
        <dbReference type="ChEBI" id="CHEBI:456215"/>
        <dbReference type="EC" id="6.3.2.1"/>
    </reaction>
</comment>
<comment type="pathway">
    <text>Cofactor biosynthesis; (R)-pantothenate biosynthesis; (R)-pantothenate from (R)-pantoate and beta-alanine: step 1/1.</text>
</comment>
<comment type="similarity">
    <text evidence="1">Belongs to the pantothenate synthetase family.</text>
</comment>
<proteinExistence type="inferred from homology"/>
<protein>
    <recommendedName>
        <fullName>Pantoate--beta-alanine ligase</fullName>
        <ecNumber>6.3.2.1</ecNumber>
    </recommendedName>
    <alternativeName>
        <fullName>Pantoate-activating enzyme</fullName>
    </alternativeName>
    <alternativeName>
        <fullName>Pantothenate synthetase</fullName>
    </alternativeName>
</protein>
<keyword id="KW-0067">ATP-binding</keyword>
<keyword id="KW-0436">Ligase</keyword>
<keyword id="KW-0547">Nucleotide-binding</keyword>
<keyword id="KW-0566">Pantothenate biosynthesis</keyword>
<keyword id="KW-1185">Reference proteome</keyword>
<dbReference type="EC" id="6.3.2.1"/>
<dbReference type="EMBL" id="CU329670">
    <property type="protein sequence ID" value="CAA89958.1"/>
    <property type="molecule type" value="Genomic_DNA"/>
</dbReference>
<dbReference type="PIR" id="S55486">
    <property type="entry name" value="S55486"/>
</dbReference>
<dbReference type="RefSeq" id="NP_592821.1">
    <property type="nucleotide sequence ID" value="NM_001018221.2"/>
</dbReference>
<dbReference type="SMR" id="Q09673"/>
<dbReference type="BioGRID" id="278115">
    <property type="interactions" value="3"/>
</dbReference>
<dbReference type="FunCoup" id="Q09673">
    <property type="interactions" value="441"/>
</dbReference>
<dbReference type="STRING" id="284812.Q09673"/>
<dbReference type="PaxDb" id="4896-SPAC5H10.08c.1"/>
<dbReference type="EnsemblFungi" id="SPAC5H10.08c.1">
    <property type="protein sequence ID" value="SPAC5H10.08c.1:pep"/>
    <property type="gene ID" value="SPAC5H10.08c"/>
</dbReference>
<dbReference type="GeneID" id="2541618"/>
<dbReference type="KEGG" id="spo:2541618"/>
<dbReference type="PomBase" id="SPAC5H10.08c">
    <property type="gene designation" value="pan6"/>
</dbReference>
<dbReference type="VEuPathDB" id="FungiDB:SPAC5H10.08c"/>
<dbReference type="eggNOG" id="KOG3042">
    <property type="taxonomic scope" value="Eukaryota"/>
</dbReference>
<dbReference type="HOGENOM" id="CLU_047148_0_0_1"/>
<dbReference type="InParanoid" id="Q09673"/>
<dbReference type="OMA" id="FHVDTEI"/>
<dbReference type="PhylomeDB" id="Q09673"/>
<dbReference type="UniPathway" id="UPA00028">
    <property type="reaction ID" value="UER00005"/>
</dbReference>
<dbReference type="PRO" id="PR:Q09673"/>
<dbReference type="Proteomes" id="UP000002485">
    <property type="component" value="Chromosome I"/>
</dbReference>
<dbReference type="GO" id="GO:0005829">
    <property type="term" value="C:cytosol"/>
    <property type="evidence" value="ECO:0007005"/>
    <property type="project" value="PomBase"/>
</dbReference>
<dbReference type="GO" id="GO:0005634">
    <property type="term" value="C:nucleus"/>
    <property type="evidence" value="ECO:0000266"/>
    <property type="project" value="PomBase"/>
</dbReference>
<dbReference type="GO" id="GO:0005524">
    <property type="term" value="F:ATP binding"/>
    <property type="evidence" value="ECO:0007669"/>
    <property type="project" value="UniProtKB-KW"/>
</dbReference>
<dbReference type="GO" id="GO:0004592">
    <property type="term" value="F:pantoate-beta-alanine ligase activity"/>
    <property type="evidence" value="ECO:0000318"/>
    <property type="project" value="GO_Central"/>
</dbReference>
<dbReference type="GO" id="GO:0015940">
    <property type="term" value="P:pantothenate biosynthetic process"/>
    <property type="evidence" value="ECO:0000316"/>
    <property type="project" value="PomBase"/>
</dbReference>
<dbReference type="CDD" id="cd00560">
    <property type="entry name" value="PanC"/>
    <property type="match status" value="1"/>
</dbReference>
<dbReference type="FunFam" id="3.30.1300.10:FF:000001">
    <property type="entry name" value="Pantothenate synthetase"/>
    <property type="match status" value="1"/>
</dbReference>
<dbReference type="FunFam" id="3.40.50.620:FF:000013">
    <property type="entry name" value="Pantothenate synthetase"/>
    <property type="match status" value="1"/>
</dbReference>
<dbReference type="Gene3D" id="3.40.50.620">
    <property type="entry name" value="HUPs"/>
    <property type="match status" value="1"/>
</dbReference>
<dbReference type="Gene3D" id="3.30.1300.10">
    <property type="entry name" value="Pantoate-beta-alanine ligase, C-terminal domain"/>
    <property type="match status" value="1"/>
</dbReference>
<dbReference type="HAMAP" id="MF_00158">
    <property type="entry name" value="PanC"/>
    <property type="match status" value="1"/>
</dbReference>
<dbReference type="InterPro" id="IPR004821">
    <property type="entry name" value="Cyt_trans-like"/>
</dbReference>
<dbReference type="InterPro" id="IPR003721">
    <property type="entry name" value="Pantoate_ligase"/>
</dbReference>
<dbReference type="InterPro" id="IPR042176">
    <property type="entry name" value="Pantoate_ligase_C"/>
</dbReference>
<dbReference type="InterPro" id="IPR014729">
    <property type="entry name" value="Rossmann-like_a/b/a_fold"/>
</dbReference>
<dbReference type="NCBIfam" id="TIGR00125">
    <property type="entry name" value="cyt_tran_rel"/>
    <property type="match status" value="1"/>
</dbReference>
<dbReference type="NCBIfam" id="TIGR00018">
    <property type="entry name" value="panC"/>
    <property type="match status" value="1"/>
</dbReference>
<dbReference type="PANTHER" id="PTHR21299">
    <property type="entry name" value="CYTIDYLATE KINASE/PANTOATE-BETA-ALANINE LIGASE"/>
    <property type="match status" value="1"/>
</dbReference>
<dbReference type="PANTHER" id="PTHR21299:SF1">
    <property type="entry name" value="PANTOATE--BETA-ALANINE LIGASE"/>
    <property type="match status" value="1"/>
</dbReference>
<dbReference type="Pfam" id="PF02569">
    <property type="entry name" value="Pantoate_ligase"/>
    <property type="match status" value="1"/>
</dbReference>
<dbReference type="SUPFAM" id="SSF52374">
    <property type="entry name" value="Nucleotidylyl transferase"/>
    <property type="match status" value="1"/>
</dbReference>
<sequence length="283" mass="31877">MQVLKEKLLIHQQVDNWRKDGNRIAFVPTMGNLHEGHFSLVREAKRHAEKVVVSIFVNPMQFNNPQDLLLYPRTMDQDCSQLQNLGVDLVYAPTVEELYPEGSQDITFVDVPKLSTMLEGASRPGHFRGVTTVVSKLFHIVNPDVACFGEKDFQQVAIIKKMVRDLNFFIEIIQVPIVRADDGLALSSRNGYLTSEERKIAPNLYKILKKLAQELSNGNGDLEKLIAETNTELSRCRFIPDQLEICDSTTLEPFTAGTKNVVILAAAWLGKARLIDNIQTTIN</sequence>
<reference key="1">
    <citation type="journal article" date="2002" name="Nature">
        <title>The genome sequence of Schizosaccharomyces pombe.</title>
        <authorList>
            <person name="Wood V."/>
            <person name="Gwilliam R."/>
            <person name="Rajandream M.A."/>
            <person name="Lyne M.H."/>
            <person name="Lyne R."/>
            <person name="Stewart A."/>
            <person name="Sgouros J.G."/>
            <person name="Peat N."/>
            <person name="Hayles J."/>
            <person name="Baker S.G."/>
            <person name="Basham D."/>
            <person name="Bowman S."/>
            <person name="Brooks K."/>
            <person name="Brown D."/>
            <person name="Brown S."/>
            <person name="Chillingworth T."/>
            <person name="Churcher C.M."/>
            <person name="Collins M."/>
            <person name="Connor R."/>
            <person name="Cronin A."/>
            <person name="Davis P."/>
            <person name="Feltwell T."/>
            <person name="Fraser A."/>
            <person name="Gentles S."/>
            <person name="Goble A."/>
            <person name="Hamlin N."/>
            <person name="Harris D.E."/>
            <person name="Hidalgo J."/>
            <person name="Hodgson G."/>
            <person name="Holroyd S."/>
            <person name="Hornsby T."/>
            <person name="Howarth S."/>
            <person name="Huckle E.J."/>
            <person name="Hunt S."/>
            <person name="Jagels K."/>
            <person name="James K.D."/>
            <person name="Jones L."/>
            <person name="Jones M."/>
            <person name="Leather S."/>
            <person name="McDonald S."/>
            <person name="McLean J."/>
            <person name="Mooney P."/>
            <person name="Moule S."/>
            <person name="Mungall K.L."/>
            <person name="Murphy L.D."/>
            <person name="Niblett D."/>
            <person name="Odell C."/>
            <person name="Oliver K."/>
            <person name="O'Neil S."/>
            <person name="Pearson D."/>
            <person name="Quail M.A."/>
            <person name="Rabbinowitsch E."/>
            <person name="Rutherford K.M."/>
            <person name="Rutter S."/>
            <person name="Saunders D."/>
            <person name="Seeger K."/>
            <person name="Sharp S."/>
            <person name="Skelton J."/>
            <person name="Simmonds M.N."/>
            <person name="Squares R."/>
            <person name="Squares S."/>
            <person name="Stevens K."/>
            <person name="Taylor K."/>
            <person name="Taylor R.G."/>
            <person name="Tivey A."/>
            <person name="Walsh S.V."/>
            <person name="Warren T."/>
            <person name="Whitehead S."/>
            <person name="Woodward J.R."/>
            <person name="Volckaert G."/>
            <person name="Aert R."/>
            <person name="Robben J."/>
            <person name="Grymonprez B."/>
            <person name="Weltjens I."/>
            <person name="Vanstreels E."/>
            <person name="Rieger M."/>
            <person name="Schaefer M."/>
            <person name="Mueller-Auer S."/>
            <person name="Gabel C."/>
            <person name="Fuchs M."/>
            <person name="Duesterhoeft A."/>
            <person name="Fritzc C."/>
            <person name="Holzer E."/>
            <person name="Moestl D."/>
            <person name="Hilbert H."/>
            <person name="Borzym K."/>
            <person name="Langer I."/>
            <person name="Beck A."/>
            <person name="Lehrach H."/>
            <person name="Reinhardt R."/>
            <person name="Pohl T.M."/>
            <person name="Eger P."/>
            <person name="Zimmermann W."/>
            <person name="Wedler H."/>
            <person name="Wambutt R."/>
            <person name="Purnelle B."/>
            <person name="Goffeau A."/>
            <person name="Cadieu E."/>
            <person name="Dreano S."/>
            <person name="Gloux S."/>
            <person name="Lelaure V."/>
            <person name="Mottier S."/>
            <person name="Galibert F."/>
            <person name="Aves S.J."/>
            <person name="Xiang Z."/>
            <person name="Hunt C."/>
            <person name="Moore K."/>
            <person name="Hurst S.M."/>
            <person name="Lucas M."/>
            <person name="Rochet M."/>
            <person name="Gaillardin C."/>
            <person name="Tallada V.A."/>
            <person name="Garzon A."/>
            <person name="Thode G."/>
            <person name="Daga R.R."/>
            <person name="Cruzado L."/>
            <person name="Jimenez J."/>
            <person name="Sanchez M."/>
            <person name="del Rey F."/>
            <person name="Benito J."/>
            <person name="Dominguez A."/>
            <person name="Revuelta J.L."/>
            <person name="Moreno S."/>
            <person name="Armstrong J."/>
            <person name="Forsburg S.L."/>
            <person name="Cerutti L."/>
            <person name="Lowe T."/>
            <person name="McCombie W.R."/>
            <person name="Paulsen I."/>
            <person name="Potashkin J."/>
            <person name="Shpakovski G.V."/>
            <person name="Ussery D."/>
            <person name="Barrell B.G."/>
            <person name="Nurse P."/>
        </authorList>
    </citation>
    <scope>NUCLEOTIDE SEQUENCE [LARGE SCALE GENOMIC DNA]</scope>
    <source>
        <strain>972 / ATCC 24843</strain>
    </source>
</reference>
<feature type="chain" id="PRO_0000128297" description="Pantoate--beta-alanine ligase">
    <location>
        <begin position="1"/>
        <end position="283"/>
    </location>
</feature>